<keyword id="KW-1185">Reference proteome</keyword>
<keyword id="KW-0678">Repressor</keyword>
<keyword id="KW-0687">Ribonucleoprotein</keyword>
<keyword id="KW-0689">Ribosomal protein</keyword>
<keyword id="KW-0694">RNA-binding</keyword>
<keyword id="KW-0699">rRNA-binding</keyword>
<keyword id="KW-0810">Translation regulation</keyword>
<keyword id="KW-0820">tRNA-binding</keyword>
<dbReference type="EMBL" id="CP000282">
    <property type="protein sequence ID" value="ABD80183.1"/>
    <property type="molecule type" value="Genomic_DNA"/>
</dbReference>
<dbReference type="RefSeq" id="WP_011467404.1">
    <property type="nucleotide sequence ID" value="NC_007912.1"/>
</dbReference>
<dbReference type="SMR" id="Q21M96"/>
<dbReference type="STRING" id="203122.Sde_0921"/>
<dbReference type="GeneID" id="98612607"/>
<dbReference type="KEGG" id="sde:Sde_0921"/>
<dbReference type="eggNOG" id="COG0081">
    <property type="taxonomic scope" value="Bacteria"/>
</dbReference>
<dbReference type="HOGENOM" id="CLU_062853_0_0_6"/>
<dbReference type="OrthoDB" id="9803740at2"/>
<dbReference type="Proteomes" id="UP000001947">
    <property type="component" value="Chromosome"/>
</dbReference>
<dbReference type="GO" id="GO:0022625">
    <property type="term" value="C:cytosolic large ribosomal subunit"/>
    <property type="evidence" value="ECO:0007669"/>
    <property type="project" value="TreeGrafter"/>
</dbReference>
<dbReference type="GO" id="GO:0019843">
    <property type="term" value="F:rRNA binding"/>
    <property type="evidence" value="ECO:0007669"/>
    <property type="project" value="UniProtKB-UniRule"/>
</dbReference>
<dbReference type="GO" id="GO:0003735">
    <property type="term" value="F:structural constituent of ribosome"/>
    <property type="evidence" value="ECO:0007669"/>
    <property type="project" value="InterPro"/>
</dbReference>
<dbReference type="GO" id="GO:0000049">
    <property type="term" value="F:tRNA binding"/>
    <property type="evidence" value="ECO:0007669"/>
    <property type="project" value="UniProtKB-KW"/>
</dbReference>
<dbReference type="GO" id="GO:0006417">
    <property type="term" value="P:regulation of translation"/>
    <property type="evidence" value="ECO:0007669"/>
    <property type="project" value="UniProtKB-KW"/>
</dbReference>
<dbReference type="GO" id="GO:0006412">
    <property type="term" value="P:translation"/>
    <property type="evidence" value="ECO:0007669"/>
    <property type="project" value="UniProtKB-UniRule"/>
</dbReference>
<dbReference type="CDD" id="cd00403">
    <property type="entry name" value="Ribosomal_L1"/>
    <property type="match status" value="1"/>
</dbReference>
<dbReference type="FunFam" id="3.40.50.790:FF:000001">
    <property type="entry name" value="50S ribosomal protein L1"/>
    <property type="match status" value="1"/>
</dbReference>
<dbReference type="Gene3D" id="3.30.190.20">
    <property type="match status" value="1"/>
</dbReference>
<dbReference type="Gene3D" id="3.40.50.790">
    <property type="match status" value="1"/>
</dbReference>
<dbReference type="HAMAP" id="MF_01318_B">
    <property type="entry name" value="Ribosomal_uL1_B"/>
    <property type="match status" value="1"/>
</dbReference>
<dbReference type="InterPro" id="IPR005878">
    <property type="entry name" value="Ribosom_uL1_bac-type"/>
</dbReference>
<dbReference type="InterPro" id="IPR002143">
    <property type="entry name" value="Ribosomal_uL1"/>
</dbReference>
<dbReference type="InterPro" id="IPR023674">
    <property type="entry name" value="Ribosomal_uL1-like"/>
</dbReference>
<dbReference type="InterPro" id="IPR028364">
    <property type="entry name" value="Ribosomal_uL1/biogenesis"/>
</dbReference>
<dbReference type="InterPro" id="IPR016095">
    <property type="entry name" value="Ribosomal_uL1_3-a/b-sand"/>
</dbReference>
<dbReference type="InterPro" id="IPR023673">
    <property type="entry name" value="Ribosomal_uL1_CS"/>
</dbReference>
<dbReference type="NCBIfam" id="TIGR01169">
    <property type="entry name" value="rplA_bact"/>
    <property type="match status" value="1"/>
</dbReference>
<dbReference type="PANTHER" id="PTHR36427">
    <property type="entry name" value="54S RIBOSOMAL PROTEIN L1, MITOCHONDRIAL"/>
    <property type="match status" value="1"/>
</dbReference>
<dbReference type="PANTHER" id="PTHR36427:SF3">
    <property type="entry name" value="LARGE RIBOSOMAL SUBUNIT PROTEIN UL1M"/>
    <property type="match status" value="1"/>
</dbReference>
<dbReference type="Pfam" id="PF00687">
    <property type="entry name" value="Ribosomal_L1"/>
    <property type="match status" value="1"/>
</dbReference>
<dbReference type="PIRSF" id="PIRSF002155">
    <property type="entry name" value="Ribosomal_L1"/>
    <property type="match status" value="1"/>
</dbReference>
<dbReference type="SUPFAM" id="SSF56808">
    <property type="entry name" value="Ribosomal protein L1"/>
    <property type="match status" value="1"/>
</dbReference>
<dbReference type="PROSITE" id="PS01199">
    <property type="entry name" value="RIBOSOMAL_L1"/>
    <property type="match status" value="1"/>
</dbReference>
<evidence type="ECO:0000255" key="1">
    <source>
        <dbReference type="HAMAP-Rule" id="MF_01318"/>
    </source>
</evidence>
<evidence type="ECO:0000305" key="2"/>
<sequence length="231" mass="24175">MAKLSKRQKLINEKVDSTKAYSIEEAVALLQELSKVKFSETVDAAINLGIDPRKSDQAVRGATSLPHGTGKDVRVAVFTQGANAEAAKEAGAEFVGMEDLAEQIKGGMMDFDVVIADPAAMRVVGMLGQVLGPRGLMPNPKTGTVTPDVVGAVKNAKAGQVRYRADKGGIIHGGIGKISFDANAIKENLEALISDLKKAKPASAKGIYVKRVSLSTTMGPGLTIDQSSLTA</sequence>
<comment type="function">
    <text evidence="1">Binds directly to 23S rRNA. The L1 stalk is quite mobile in the ribosome, and is involved in E site tRNA release.</text>
</comment>
<comment type="function">
    <text evidence="1">Protein L1 is also a translational repressor protein, it controls the translation of the L11 operon by binding to its mRNA.</text>
</comment>
<comment type="subunit">
    <text evidence="1">Part of the 50S ribosomal subunit.</text>
</comment>
<comment type="similarity">
    <text evidence="1">Belongs to the universal ribosomal protein uL1 family.</text>
</comment>
<proteinExistence type="inferred from homology"/>
<accession>Q21M96</accession>
<organism>
    <name type="scientific">Saccharophagus degradans (strain 2-40 / ATCC 43961 / DSM 17024)</name>
    <dbReference type="NCBI Taxonomy" id="203122"/>
    <lineage>
        <taxon>Bacteria</taxon>
        <taxon>Pseudomonadati</taxon>
        <taxon>Pseudomonadota</taxon>
        <taxon>Gammaproteobacteria</taxon>
        <taxon>Cellvibrionales</taxon>
        <taxon>Cellvibrionaceae</taxon>
        <taxon>Saccharophagus</taxon>
    </lineage>
</organism>
<reference key="1">
    <citation type="journal article" date="2008" name="PLoS Genet.">
        <title>Complete genome sequence of the complex carbohydrate-degrading marine bacterium, Saccharophagus degradans strain 2-40 T.</title>
        <authorList>
            <person name="Weiner R.M."/>
            <person name="Taylor L.E. II"/>
            <person name="Henrissat B."/>
            <person name="Hauser L."/>
            <person name="Land M."/>
            <person name="Coutinho P.M."/>
            <person name="Rancurel C."/>
            <person name="Saunders E.H."/>
            <person name="Longmire A.G."/>
            <person name="Zhang H."/>
            <person name="Bayer E.A."/>
            <person name="Gilbert H.J."/>
            <person name="Larimer F."/>
            <person name="Zhulin I.B."/>
            <person name="Ekborg N.A."/>
            <person name="Lamed R."/>
            <person name="Richardson P.M."/>
            <person name="Borovok I."/>
            <person name="Hutcheson S."/>
        </authorList>
    </citation>
    <scope>NUCLEOTIDE SEQUENCE [LARGE SCALE GENOMIC DNA]</scope>
    <source>
        <strain>2-40 / ATCC 43961 / DSM 17024</strain>
    </source>
</reference>
<gene>
    <name evidence="1" type="primary">rplA</name>
    <name type="ordered locus">Sde_0921</name>
</gene>
<protein>
    <recommendedName>
        <fullName evidence="1">Large ribosomal subunit protein uL1</fullName>
    </recommendedName>
    <alternativeName>
        <fullName evidence="2">50S ribosomal protein L1</fullName>
    </alternativeName>
</protein>
<name>RL1_SACD2</name>
<feature type="chain" id="PRO_0000308095" description="Large ribosomal subunit protein uL1">
    <location>
        <begin position="1"/>
        <end position="231"/>
    </location>
</feature>